<sequence>MKKIILSFAFALTVTSTAHAQLPVTDAGSIAQNLANHLEQMVKFAQQIEQLKQQFEQQKMQFDALTGNRGLGDILRDPTLRSYLPHNWRDLYEAVMSGGYLAAAGETANLLRKSQVYDPCASISDKDQRIACEAKVVKPVQDKVMTSKAYDATDKRLQEIESLMQEINKTGDPKAIAELQGRIESENAMIQNEDTRLHLYQQMAEAQDKLLDERQHELDAKDNARRGYPQPKALEAAY</sequence>
<keyword id="KW-0732">Signal</keyword>
<keyword id="KW-0843">Virulence</keyword>
<comment type="similarity">
    <text evidence="3">Belongs to the virb5 family.</text>
</comment>
<gene>
    <name type="primary">virB5</name>
    <name type="ordered locus">BruAb2_0065</name>
</gene>
<dbReference type="EMBL" id="AE017224">
    <property type="protein sequence ID" value="AAX75516.1"/>
    <property type="molecule type" value="Genomic_DNA"/>
</dbReference>
<dbReference type="RefSeq" id="WP_002966514.1">
    <property type="nucleotide sequence ID" value="NC_006933.1"/>
</dbReference>
<dbReference type="SMR" id="Q57A18"/>
<dbReference type="EnsemblBacteria" id="AAX75516">
    <property type="protein sequence ID" value="AAX75516"/>
    <property type="gene ID" value="BruAb2_0065"/>
</dbReference>
<dbReference type="GeneID" id="29595513"/>
<dbReference type="KEGG" id="bmb:BruAb2_0065"/>
<dbReference type="HOGENOM" id="CLU_096790_1_0_5"/>
<dbReference type="PRO" id="PR:Q57A18"/>
<dbReference type="Proteomes" id="UP000000540">
    <property type="component" value="Chromosome II"/>
</dbReference>
<dbReference type="CDD" id="cd14262">
    <property type="entry name" value="VirB5_like"/>
    <property type="match status" value="1"/>
</dbReference>
<dbReference type="Gene3D" id="1.20.58.430">
    <property type="entry name" value="Type IV secretion system, VirB5-domain"/>
    <property type="match status" value="1"/>
</dbReference>
<dbReference type="InterPro" id="IPR014158">
    <property type="entry name" value="T4SS_VirB5"/>
</dbReference>
<dbReference type="InterPro" id="IPR023220">
    <property type="entry name" value="T4SS_VirB5-domain"/>
</dbReference>
<dbReference type="NCBIfam" id="TIGR02791">
    <property type="entry name" value="VirB5"/>
    <property type="match status" value="1"/>
</dbReference>
<dbReference type="Pfam" id="PF07996">
    <property type="entry name" value="T4SS"/>
    <property type="match status" value="1"/>
</dbReference>
<dbReference type="SUPFAM" id="SSF101082">
    <property type="entry name" value="Typo IV secretion system protein TraC"/>
    <property type="match status" value="1"/>
</dbReference>
<proteinExistence type="inferred from homology"/>
<protein>
    <recommendedName>
        <fullName>Type IV secretion system protein virB5</fullName>
    </recommendedName>
</protein>
<organism>
    <name type="scientific">Brucella abortus biovar 1 (strain 9-941)</name>
    <dbReference type="NCBI Taxonomy" id="262698"/>
    <lineage>
        <taxon>Bacteria</taxon>
        <taxon>Pseudomonadati</taxon>
        <taxon>Pseudomonadota</taxon>
        <taxon>Alphaproteobacteria</taxon>
        <taxon>Hyphomicrobiales</taxon>
        <taxon>Brucellaceae</taxon>
        <taxon>Brucella/Ochrobactrum group</taxon>
        <taxon>Brucella</taxon>
    </lineage>
</organism>
<reference key="1">
    <citation type="journal article" date="2005" name="J. Bacteriol.">
        <title>Completion of the genome sequence of Brucella abortus and comparison to the highly similar genomes of Brucella melitensis and Brucella suis.</title>
        <authorList>
            <person name="Halling S.M."/>
            <person name="Peterson-Burch B.D."/>
            <person name="Bricker B.J."/>
            <person name="Zuerner R.L."/>
            <person name="Qing Z."/>
            <person name="Li L.-L."/>
            <person name="Kapur V."/>
            <person name="Alt D.P."/>
            <person name="Olsen S.C."/>
        </authorList>
    </citation>
    <scope>NUCLEOTIDE SEQUENCE [LARGE SCALE GENOMIC DNA]</scope>
    <source>
        <strain>9-941</strain>
    </source>
</reference>
<evidence type="ECO:0000255" key="1"/>
<evidence type="ECO:0000256" key="2">
    <source>
        <dbReference type="SAM" id="MobiDB-lite"/>
    </source>
</evidence>
<evidence type="ECO:0000305" key="3"/>
<feature type="signal peptide" evidence="1">
    <location>
        <begin position="1"/>
        <end position="20"/>
    </location>
</feature>
<feature type="chain" id="PRO_0000290177" description="Type IV secretion system protein virB5">
    <location>
        <begin position="21"/>
        <end position="238"/>
    </location>
</feature>
<feature type="region of interest" description="Disordered" evidence="2">
    <location>
        <begin position="219"/>
        <end position="238"/>
    </location>
</feature>
<name>VIRB5_BRUAB</name>
<accession>Q57A18</accession>